<reference key="1">
    <citation type="journal article" date="1995" name="Science">
        <title>Whole-genome random sequencing and assembly of Haemophilus influenzae Rd.</title>
        <authorList>
            <person name="Fleischmann R.D."/>
            <person name="Adams M.D."/>
            <person name="White O."/>
            <person name="Clayton R.A."/>
            <person name="Kirkness E.F."/>
            <person name="Kerlavage A.R."/>
            <person name="Bult C.J."/>
            <person name="Tomb J.-F."/>
            <person name="Dougherty B.A."/>
            <person name="Merrick J.M."/>
            <person name="McKenney K."/>
            <person name="Sutton G.G."/>
            <person name="FitzHugh W."/>
            <person name="Fields C.A."/>
            <person name="Gocayne J.D."/>
            <person name="Scott J.D."/>
            <person name="Shirley R."/>
            <person name="Liu L.-I."/>
            <person name="Glodek A."/>
            <person name="Kelley J.M."/>
            <person name="Weidman J.F."/>
            <person name="Phillips C.A."/>
            <person name="Spriggs T."/>
            <person name="Hedblom E."/>
            <person name="Cotton M.D."/>
            <person name="Utterback T.R."/>
            <person name="Hanna M.C."/>
            <person name="Nguyen D.T."/>
            <person name="Saudek D.M."/>
            <person name="Brandon R.C."/>
            <person name="Fine L.D."/>
            <person name="Fritchman J.L."/>
            <person name="Fuhrmann J.L."/>
            <person name="Geoghagen N.S.M."/>
            <person name="Gnehm C.L."/>
            <person name="McDonald L.A."/>
            <person name="Small K.V."/>
            <person name="Fraser C.M."/>
            <person name="Smith H.O."/>
            <person name="Venter J.C."/>
        </authorList>
    </citation>
    <scope>NUCLEOTIDE SEQUENCE [LARGE SCALE GENOMIC DNA]</scope>
    <source>
        <strain>ATCC 51907 / DSM 11121 / KW20 / Rd</strain>
    </source>
</reference>
<keyword id="KW-0328">Glycosyltransferase</keyword>
<keyword id="KW-1185">Reference proteome</keyword>
<keyword id="KW-0804">Transcription</keyword>
<keyword id="KW-0805">Transcription regulation</keyword>
<keyword id="KW-0808">Transferase</keyword>
<accession>P44722</accession>
<name>PYRR_HAEIN</name>
<organism>
    <name type="scientific">Haemophilus influenzae (strain ATCC 51907 / DSM 11121 / KW20 / Rd)</name>
    <dbReference type="NCBI Taxonomy" id="71421"/>
    <lineage>
        <taxon>Bacteria</taxon>
        <taxon>Pseudomonadati</taxon>
        <taxon>Pseudomonadota</taxon>
        <taxon>Gammaproteobacteria</taxon>
        <taxon>Pasteurellales</taxon>
        <taxon>Pasteurellaceae</taxon>
        <taxon>Haemophilus</taxon>
    </lineage>
</organism>
<dbReference type="EC" id="2.4.2.9"/>
<dbReference type="EMBL" id="L42023">
    <property type="protein sequence ID" value="AAC22117.1"/>
    <property type="molecule type" value="Genomic_DNA"/>
</dbReference>
<dbReference type="PIR" id="G64069">
    <property type="entry name" value="G64069"/>
</dbReference>
<dbReference type="RefSeq" id="NP_438620.1">
    <property type="nucleotide sequence ID" value="NC_000907.1"/>
</dbReference>
<dbReference type="SMR" id="P44722"/>
<dbReference type="STRING" id="71421.HI_0459"/>
<dbReference type="EnsemblBacteria" id="AAC22117">
    <property type="protein sequence ID" value="AAC22117"/>
    <property type="gene ID" value="HI_0459"/>
</dbReference>
<dbReference type="KEGG" id="hin:HI_0459"/>
<dbReference type="PATRIC" id="fig|71421.8.peg.479"/>
<dbReference type="eggNOG" id="COG2065">
    <property type="taxonomic scope" value="Bacteria"/>
</dbReference>
<dbReference type="HOGENOM" id="CLU_094234_2_1_6"/>
<dbReference type="OrthoDB" id="9802227at2"/>
<dbReference type="PhylomeDB" id="P44722"/>
<dbReference type="BioCyc" id="HINF71421:G1GJ1-475-MONOMER"/>
<dbReference type="Proteomes" id="UP000000579">
    <property type="component" value="Chromosome"/>
</dbReference>
<dbReference type="GO" id="GO:0004845">
    <property type="term" value="F:uracil phosphoribosyltransferase activity"/>
    <property type="evidence" value="ECO:0007669"/>
    <property type="project" value="UniProtKB-UniRule"/>
</dbReference>
<dbReference type="GO" id="GO:0006355">
    <property type="term" value="P:regulation of DNA-templated transcription"/>
    <property type="evidence" value="ECO:0007669"/>
    <property type="project" value="UniProtKB-UniRule"/>
</dbReference>
<dbReference type="CDD" id="cd06223">
    <property type="entry name" value="PRTases_typeI"/>
    <property type="match status" value="1"/>
</dbReference>
<dbReference type="FunFam" id="3.40.50.2020:FF:000020">
    <property type="entry name" value="Bifunctional protein PyrR"/>
    <property type="match status" value="1"/>
</dbReference>
<dbReference type="Gene3D" id="3.40.50.2020">
    <property type="match status" value="1"/>
</dbReference>
<dbReference type="HAMAP" id="MF_01219">
    <property type="entry name" value="PyrR"/>
    <property type="match status" value="1"/>
</dbReference>
<dbReference type="InterPro" id="IPR000836">
    <property type="entry name" value="PRibTrfase_dom"/>
</dbReference>
<dbReference type="InterPro" id="IPR029057">
    <property type="entry name" value="PRTase-like"/>
</dbReference>
<dbReference type="InterPro" id="IPR023050">
    <property type="entry name" value="PyrR"/>
</dbReference>
<dbReference type="InterPro" id="IPR050137">
    <property type="entry name" value="PyrR_bifunctional"/>
</dbReference>
<dbReference type="NCBIfam" id="NF003549">
    <property type="entry name" value="PRK05205.1-5"/>
    <property type="match status" value="1"/>
</dbReference>
<dbReference type="PANTHER" id="PTHR11608">
    <property type="entry name" value="BIFUNCTIONAL PROTEIN PYRR"/>
    <property type="match status" value="1"/>
</dbReference>
<dbReference type="PANTHER" id="PTHR11608:SF0">
    <property type="entry name" value="BIFUNCTIONAL PROTEIN PYRR"/>
    <property type="match status" value="1"/>
</dbReference>
<dbReference type="Pfam" id="PF00156">
    <property type="entry name" value="Pribosyltran"/>
    <property type="match status" value="1"/>
</dbReference>
<dbReference type="SUPFAM" id="SSF53271">
    <property type="entry name" value="PRTase-like"/>
    <property type="match status" value="1"/>
</dbReference>
<gene>
    <name type="primary">pyrR</name>
    <name type="ordered locus">HI_0459</name>
</gene>
<protein>
    <recommendedName>
        <fullName>Bifunctional protein PyrR</fullName>
    </recommendedName>
    <domain>
        <recommendedName>
            <fullName>Pyrimidine operon regulatory protein</fullName>
        </recommendedName>
    </domain>
    <domain>
        <recommendedName>
            <fullName>Uracil phosphoribosyltransferase</fullName>
            <shortName>UPRTase</shortName>
            <ecNumber>2.4.2.9</ecNumber>
        </recommendedName>
    </domain>
</protein>
<proteinExistence type="inferred from homology"/>
<feature type="chain" id="PRO_0000183038" description="Bifunctional protein PyrR">
    <location>
        <begin position="1"/>
        <end position="179"/>
    </location>
</feature>
<feature type="short sequence motif" description="PRPP-binding" evidence="1">
    <location>
        <begin position="100"/>
        <end position="112"/>
    </location>
</feature>
<feature type="binding site" evidence="1">
    <location>
        <begin position="39"/>
        <end position="40"/>
    </location>
    <ligand>
        <name>substrate</name>
    </ligand>
</feature>
<feature type="binding site" evidence="1">
    <location>
        <begin position="104"/>
        <end position="112"/>
    </location>
    <ligand>
        <name>substrate</name>
    </ligand>
</feature>
<feature type="binding site" evidence="1">
    <location>
        <position position="137"/>
    </location>
    <ligand>
        <name>substrate</name>
    </ligand>
</feature>
<feature type="binding site" evidence="1">
    <location>
        <position position="161"/>
    </location>
    <ligand>
        <name>substrate</name>
    </ligand>
</feature>
<comment type="function">
    <text evidence="1">Regulates the transcription of the pyrimidine nucleotide (pyr) operon in response to exogenous pyrimidines.</text>
</comment>
<comment type="function">
    <text evidence="1">Also displays a weak uracil phosphoribosyltransferase activity which is not physiologically significant.</text>
</comment>
<comment type="catalytic activity">
    <reaction>
        <text>UMP + diphosphate = 5-phospho-alpha-D-ribose 1-diphosphate + uracil</text>
        <dbReference type="Rhea" id="RHEA:13017"/>
        <dbReference type="ChEBI" id="CHEBI:17568"/>
        <dbReference type="ChEBI" id="CHEBI:33019"/>
        <dbReference type="ChEBI" id="CHEBI:57865"/>
        <dbReference type="ChEBI" id="CHEBI:58017"/>
        <dbReference type="EC" id="2.4.2.9"/>
    </reaction>
</comment>
<comment type="similarity">
    <text evidence="2">Belongs to the purine/pyrimidine phosphoribosyltransferase family. PyrR subfamily.</text>
</comment>
<sequence length="179" mass="20528">MEKIIIDHDRFLRTISRISHEIIEKHQTLDDLVIVGIKRRGAEIAELLQRRVEELSSINLPSMELDITFYRDDLTLVDQEDKMPVYSGSSQYLNIQDKTVILVDDVLFTGRTIRAAMDALTDFGRAAKIELVIFVDRGHRELPIRADYVGKNVPTSRDELVQVRTEKQDGCYEVAILGK</sequence>
<evidence type="ECO:0000250" key="1"/>
<evidence type="ECO:0000305" key="2"/>